<keyword id="KW-0968">Cytoplasmic vesicle</keyword>
<keyword id="KW-0256">Endoplasmic reticulum</keyword>
<keyword id="KW-0472">Membrane</keyword>
<keyword id="KW-1185">Reference proteome</keyword>
<keyword id="KW-0812">Transmembrane</keyword>
<keyword id="KW-1133">Transmembrane helix</keyword>
<proteinExistence type="inferred from homology"/>
<protein>
    <recommendedName>
        <fullName evidence="1">Vacuolar ATPase assembly integral membrane protein VMA21</fullName>
    </recommendedName>
</protein>
<evidence type="ECO:0000255" key="1">
    <source>
        <dbReference type="HAMAP-Rule" id="MF_03058"/>
    </source>
</evidence>
<organism>
    <name type="scientific">Candida glabrata (strain ATCC 2001 / BCRC 20586 / JCM 3761 / NBRC 0622 / NRRL Y-65 / CBS 138)</name>
    <name type="common">Yeast</name>
    <name type="synonym">Nakaseomyces glabratus</name>
    <dbReference type="NCBI Taxonomy" id="284593"/>
    <lineage>
        <taxon>Eukaryota</taxon>
        <taxon>Fungi</taxon>
        <taxon>Dikarya</taxon>
        <taxon>Ascomycota</taxon>
        <taxon>Saccharomycotina</taxon>
        <taxon>Saccharomycetes</taxon>
        <taxon>Saccharomycetales</taxon>
        <taxon>Saccharomycetaceae</taxon>
        <taxon>Nakaseomyces</taxon>
    </lineage>
</organism>
<feature type="chain" id="PRO_0000377583" description="Vacuolar ATPase assembly integral membrane protein VMA21">
    <location>
        <begin position="1"/>
        <end position="78"/>
    </location>
</feature>
<feature type="topological domain" description="Cytoplasmic" evidence="1">
    <location>
        <begin position="1"/>
        <end position="12"/>
    </location>
</feature>
<feature type="transmembrane region" description="Helical" evidence="1">
    <location>
        <begin position="13"/>
        <end position="33"/>
    </location>
</feature>
<feature type="topological domain" description="Lumenal" evidence="1">
    <location>
        <begin position="34"/>
        <end position="38"/>
    </location>
</feature>
<feature type="transmembrane region" description="Helical" evidence="1">
    <location>
        <begin position="39"/>
        <end position="59"/>
    </location>
</feature>
<feature type="topological domain" description="Cytoplasmic" evidence="1">
    <location>
        <begin position="60"/>
        <end position="78"/>
    </location>
</feature>
<dbReference type="EMBL" id="CR380953">
    <property type="protein sequence ID" value="CAR58028.1"/>
    <property type="molecule type" value="Genomic_DNA"/>
</dbReference>
<dbReference type="RefSeq" id="XP_002999547.1">
    <property type="nucleotide sequence ID" value="XM_002999501.1"/>
</dbReference>
<dbReference type="SMR" id="B4UN04"/>
<dbReference type="FunCoup" id="B4UN04">
    <property type="interactions" value="68"/>
</dbReference>
<dbReference type="STRING" id="284593.B4UN04"/>
<dbReference type="EnsemblFungi" id="CAGL0G07881g-T">
    <property type="protein sequence ID" value="CAGL0G07881g-T-p1"/>
    <property type="gene ID" value="CAGL0G07881g"/>
</dbReference>
<dbReference type="KEGG" id="cgr:9487997"/>
<dbReference type="CGD" id="CAL0130669">
    <property type="gene designation" value="CAGL0G07881g"/>
</dbReference>
<dbReference type="VEuPathDB" id="FungiDB:B1J91_G07881g"/>
<dbReference type="VEuPathDB" id="FungiDB:CAGL0G07881g"/>
<dbReference type="eggNOG" id="ENOG502SBNA">
    <property type="taxonomic scope" value="Eukaryota"/>
</dbReference>
<dbReference type="HOGENOM" id="CLU_154717_1_0_1"/>
<dbReference type="InParanoid" id="B4UN04"/>
<dbReference type="Proteomes" id="UP000002428">
    <property type="component" value="Chromosome G"/>
</dbReference>
<dbReference type="GO" id="GO:0005789">
    <property type="term" value="C:endoplasmic reticulum membrane"/>
    <property type="evidence" value="ECO:0007669"/>
    <property type="project" value="UniProtKB-SubCell"/>
</dbReference>
<dbReference type="GO" id="GO:0033116">
    <property type="term" value="C:endoplasmic reticulum-Golgi intermediate compartment membrane"/>
    <property type="evidence" value="ECO:0007669"/>
    <property type="project" value="UniProtKB-SubCell"/>
</dbReference>
<dbReference type="GO" id="GO:0012507">
    <property type="term" value="C:ER to Golgi transport vesicle membrane"/>
    <property type="evidence" value="ECO:0007669"/>
    <property type="project" value="UniProtKB-SubCell"/>
</dbReference>
<dbReference type="GO" id="GO:0070072">
    <property type="term" value="P:vacuolar proton-transporting V-type ATPase complex assembly"/>
    <property type="evidence" value="ECO:0007669"/>
    <property type="project" value="UniProtKB-UniRule"/>
</dbReference>
<dbReference type="HAMAP" id="MF_03058">
    <property type="entry name" value="VMA21"/>
    <property type="match status" value="1"/>
</dbReference>
<dbReference type="InterPro" id="IPR019013">
    <property type="entry name" value="Vma21"/>
</dbReference>
<dbReference type="PANTHER" id="PTHR31792">
    <property type="entry name" value="VACUOLAR ATPASE ASSEMBLY INTEGRAL MEMBRANE PROTEIN VMA21"/>
    <property type="match status" value="1"/>
</dbReference>
<dbReference type="PANTHER" id="PTHR31792:SF3">
    <property type="entry name" value="VACUOLAR ATPASE ASSEMBLY INTEGRAL MEMBRANE PROTEIN VMA21"/>
    <property type="match status" value="1"/>
</dbReference>
<dbReference type="Pfam" id="PF09446">
    <property type="entry name" value="VMA21"/>
    <property type="match status" value="1"/>
</dbReference>
<name>VMA21_CANGA</name>
<gene>
    <name evidence="1" type="primary">VMA21</name>
    <name type="ordered locus">CAGL0G07881g</name>
</gene>
<comment type="function">
    <text evidence="1">Required for the assembly of the V0 complex of the vacuolar ATPase (V-ATPase) in the endoplasmic reticulum.</text>
</comment>
<comment type="subcellular location">
    <subcellularLocation>
        <location evidence="1">Endoplasmic reticulum membrane</location>
        <topology evidence="1">Multi-pass membrane protein</topology>
    </subcellularLocation>
    <subcellularLocation>
        <location evidence="1">Endoplasmic reticulum-Golgi intermediate compartment membrane</location>
        <topology evidence="1">Multi-pass membrane protein</topology>
    </subcellularLocation>
    <subcellularLocation>
        <location evidence="1">Cytoplasmic vesicle</location>
        <location evidence="1">COPII-coated vesicle membrane</location>
        <topology evidence="1">Multi-pass membrane protein</topology>
    </subcellularLocation>
</comment>
<comment type="similarity">
    <text evidence="1">Belongs to the VMA21 family.</text>
</comment>
<reference key="1">
    <citation type="journal article" date="2004" name="Nature">
        <title>Genome evolution in yeasts.</title>
        <authorList>
            <person name="Dujon B."/>
            <person name="Sherman D."/>
            <person name="Fischer G."/>
            <person name="Durrens P."/>
            <person name="Casaregola S."/>
            <person name="Lafontaine I."/>
            <person name="de Montigny J."/>
            <person name="Marck C."/>
            <person name="Neuveglise C."/>
            <person name="Talla E."/>
            <person name="Goffard N."/>
            <person name="Frangeul L."/>
            <person name="Aigle M."/>
            <person name="Anthouard V."/>
            <person name="Babour A."/>
            <person name="Barbe V."/>
            <person name="Barnay S."/>
            <person name="Blanchin S."/>
            <person name="Beckerich J.-M."/>
            <person name="Beyne E."/>
            <person name="Bleykasten C."/>
            <person name="Boisrame A."/>
            <person name="Boyer J."/>
            <person name="Cattolico L."/>
            <person name="Confanioleri F."/>
            <person name="de Daruvar A."/>
            <person name="Despons L."/>
            <person name="Fabre E."/>
            <person name="Fairhead C."/>
            <person name="Ferry-Dumazet H."/>
            <person name="Groppi A."/>
            <person name="Hantraye F."/>
            <person name="Hennequin C."/>
            <person name="Jauniaux N."/>
            <person name="Joyet P."/>
            <person name="Kachouri R."/>
            <person name="Kerrest A."/>
            <person name="Koszul R."/>
            <person name="Lemaire M."/>
            <person name="Lesur I."/>
            <person name="Ma L."/>
            <person name="Muller H."/>
            <person name="Nicaud J.-M."/>
            <person name="Nikolski M."/>
            <person name="Oztas S."/>
            <person name="Ozier-Kalogeropoulos O."/>
            <person name="Pellenz S."/>
            <person name="Potier S."/>
            <person name="Richard G.-F."/>
            <person name="Straub M.-L."/>
            <person name="Suleau A."/>
            <person name="Swennen D."/>
            <person name="Tekaia F."/>
            <person name="Wesolowski-Louvel M."/>
            <person name="Westhof E."/>
            <person name="Wirth B."/>
            <person name="Zeniou-Meyer M."/>
            <person name="Zivanovic Y."/>
            <person name="Bolotin-Fukuhara M."/>
            <person name="Thierry A."/>
            <person name="Bouchier C."/>
            <person name="Caudron B."/>
            <person name="Scarpelli C."/>
            <person name="Gaillardin C."/>
            <person name="Weissenbach J."/>
            <person name="Wincker P."/>
            <person name="Souciet J.-L."/>
        </authorList>
    </citation>
    <scope>NUCLEOTIDE SEQUENCE [LARGE SCALE GENOMIC DNA]</scope>
    <source>
        <strain>ATCC 2001 / BCRC 20586 / JCM 3761 / NBRC 0622 / NRRL Y-65 / CBS 138</strain>
    </source>
</reference>
<accession>B4UN04</accession>
<sequence>MAVDVPKSVIKKLVFFTVAMVVLPLLTFFTLQHLTSNTIISGGLAALMANVVLVGYIIAAFTEDTTEYAPEGKESKKE</sequence>